<proteinExistence type="inferred from homology"/>
<protein>
    <recommendedName>
        <fullName evidence="1">Putative thymidine phosphorylase</fullName>
        <ecNumber evidence="1">2.4.2.4</ecNumber>
    </recommendedName>
    <alternativeName>
        <fullName evidence="1">TdRPase</fullName>
    </alternativeName>
</protein>
<name>TYPH_LEGPH</name>
<dbReference type="EC" id="2.4.2.4" evidence="1"/>
<dbReference type="EMBL" id="AE017354">
    <property type="protein sequence ID" value="AAU27108.1"/>
    <property type="molecule type" value="Genomic_DNA"/>
</dbReference>
<dbReference type="RefSeq" id="YP_095055.1">
    <property type="nucleotide sequence ID" value="NC_002942.5"/>
</dbReference>
<dbReference type="SMR" id="Q5ZWR3"/>
<dbReference type="STRING" id="272624.lpg1022"/>
<dbReference type="PaxDb" id="272624-lpg1022"/>
<dbReference type="KEGG" id="lpn:lpg1022"/>
<dbReference type="PATRIC" id="fig|272624.6.peg.1061"/>
<dbReference type="eggNOG" id="COG0213">
    <property type="taxonomic scope" value="Bacteria"/>
</dbReference>
<dbReference type="HOGENOM" id="CLU_025040_6_0_6"/>
<dbReference type="OrthoDB" id="341217at2"/>
<dbReference type="Proteomes" id="UP000000609">
    <property type="component" value="Chromosome"/>
</dbReference>
<dbReference type="GO" id="GO:0005829">
    <property type="term" value="C:cytosol"/>
    <property type="evidence" value="ECO:0007669"/>
    <property type="project" value="TreeGrafter"/>
</dbReference>
<dbReference type="GO" id="GO:0004645">
    <property type="term" value="F:1,4-alpha-oligoglucan phosphorylase activity"/>
    <property type="evidence" value="ECO:0007669"/>
    <property type="project" value="InterPro"/>
</dbReference>
<dbReference type="GO" id="GO:0009032">
    <property type="term" value="F:thymidine phosphorylase activity"/>
    <property type="evidence" value="ECO:0007669"/>
    <property type="project" value="UniProtKB-UniRule"/>
</dbReference>
<dbReference type="GO" id="GO:0006206">
    <property type="term" value="P:pyrimidine nucleobase metabolic process"/>
    <property type="evidence" value="ECO:0007669"/>
    <property type="project" value="InterPro"/>
</dbReference>
<dbReference type="GO" id="GO:0006213">
    <property type="term" value="P:pyrimidine nucleoside metabolic process"/>
    <property type="evidence" value="ECO:0007669"/>
    <property type="project" value="InterPro"/>
</dbReference>
<dbReference type="Gene3D" id="1.20.970.50">
    <property type="match status" value="1"/>
</dbReference>
<dbReference type="Gene3D" id="2.40.40.20">
    <property type="match status" value="1"/>
</dbReference>
<dbReference type="Gene3D" id="3.40.1030.10">
    <property type="entry name" value="Nucleoside phosphorylase/phosphoribosyltransferase catalytic domain"/>
    <property type="match status" value="1"/>
</dbReference>
<dbReference type="Gene3D" id="3.90.1170.30">
    <property type="entry name" value="Pyrimidine nucleoside phosphorylase-like, C-terminal domain"/>
    <property type="match status" value="1"/>
</dbReference>
<dbReference type="HAMAP" id="MF_00703">
    <property type="entry name" value="Thymid_phosp_2"/>
    <property type="match status" value="1"/>
</dbReference>
<dbReference type="InterPro" id="IPR000312">
    <property type="entry name" value="Glycosyl_Trfase_fam3"/>
</dbReference>
<dbReference type="InterPro" id="IPR017459">
    <property type="entry name" value="Glycosyl_Trfase_fam3_N_dom"/>
</dbReference>
<dbReference type="InterPro" id="IPR036320">
    <property type="entry name" value="Glycosyl_Trfase_fam3_N_dom_sf"/>
</dbReference>
<dbReference type="InterPro" id="IPR035902">
    <property type="entry name" value="Nuc_phospho_transferase"/>
</dbReference>
<dbReference type="InterPro" id="IPR036566">
    <property type="entry name" value="PYNP-like_C_sf"/>
</dbReference>
<dbReference type="InterPro" id="IPR013102">
    <property type="entry name" value="PYNP_C"/>
</dbReference>
<dbReference type="InterPro" id="IPR017872">
    <property type="entry name" value="Pyrmidine_PPase_CS"/>
</dbReference>
<dbReference type="InterPro" id="IPR028579">
    <property type="entry name" value="Thym_Pase_Put"/>
</dbReference>
<dbReference type="InterPro" id="IPR013466">
    <property type="entry name" value="Thymidine/AMP_Pase"/>
</dbReference>
<dbReference type="InterPro" id="IPR000053">
    <property type="entry name" value="Thymidine/pyrmidine_PPase"/>
</dbReference>
<dbReference type="NCBIfam" id="TIGR02645">
    <property type="entry name" value="ARCH_P_rylase"/>
    <property type="match status" value="1"/>
</dbReference>
<dbReference type="NCBIfam" id="NF003338">
    <property type="entry name" value="PRK04350.1"/>
    <property type="match status" value="1"/>
</dbReference>
<dbReference type="PANTHER" id="PTHR10515">
    <property type="entry name" value="THYMIDINE PHOSPHORYLASE"/>
    <property type="match status" value="1"/>
</dbReference>
<dbReference type="PANTHER" id="PTHR10515:SF0">
    <property type="entry name" value="THYMIDINE PHOSPHORYLASE"/>
    <property type="match status" value="1"/>
</dbReference>
<dbReference type="Pfam" id="PF02885">
    <property type="entry name" value="Glycos_trans_3N"/>
    <property type="match status" value="1"/>
</dbReference>
<dbReference type="Pfam" id="PF00591">
    <property type="entry name" value="Glycos_transf_3"/>
    <property type="match status" value="1"/>
</dbReference>
<dbReference type="Pfam" id="PF07831">
    <property type="entry name" value="PYNP_C"/>
    <property type="match status" value="1"/>
</dbReference>
<dbReference type="SMART" id="SM00941">
    <property type="entry name" value="PYNP_C"/>
    <property type="match status" value="1"/>
</dbReference>
<dbReference type="SUPFAM" id="SSF52418">
    <property type="entry name" value="Nucleoside phosphorylase/phosphoribosyltransferase catalytic domain"/>
    <property type="match status" value="1"/>
</dbReference>
<dbReference type="SUPFAM" id="SSF47648">
    <property type="entry name" value="Nucleoside phosphorylase/phosphoribosyltransferase N-terminal domain"/>
    <property type="match status" value="1"/>
</dbReference>
<dbReference type="SUPFAM" id="SSF54680">
    <property type="entry name" value="Pyrimidine nucleoside phosphorylase C-terminal domain"/>
    <property type="match status" value="1"/>
</dbReference>
<dbReference type="PROSITE" id="PS00647">
    <property type="entry name" value="THYMID_PHOSPHORYLASE"/>
    <property type="match status" value="1"/>
</dbReference>
<organism>
    <name type="scientific">Legionella pneumophila subsp. pneumophila (strain Philadelphia 1 / ATCC 33152 / DSM 7513)</name>
    <dbReference type="NCBI Taxonomy" id="272624"/>
    <lineage>
        <taxon>Bacteria</taxon>
        <taxon>Pseudomonadati</taxon>
        <taxon>Pseudomonadota</taxon>
        <taxon>Gammaproteobacteria</taxon>
        <taxon>Legionellales</taxon>
        <taxon>Legionellaceae</taxon>
        <taxon>Legionella</taxon>
    </lineage>
</organism>
<feature type="chain" id="PRO_0000225647" description="Putative thymidine phosphorylase">
    <location>
        <begin position="1"/>
        <end position="517"/>
    </location>
</feature>
<comment type="catalytic activity">
    <reaction evidence="1">
        <text>thymidine + phosphate = 2-deoxy-alpha-D-ribose 1-phosphate + thymine</text>
        <dbReference type="Rhea" id="RHEA:16037"/>
        <dbReference type="ChEBI" id="CHEBI:17748"/>
        <dbReference type="ChEBI" id="CHEBI:17821"/>
        <dbReference type="ChEBI" id="CHEBI:43474"/>
        <dbReference type="ChEBI" id="CHEBI:57259"/>
        <dbReference type="EC" id="2.4.2.4"/>
    </reaction>
</comment>
<comment type="similarity">
    <text evidence="1">Belongs to the thymidine/pyrimidine-nucleoside phosphorylase family. Type 2 subfamily.</text>
</comment>
<keyword id="KW-0328">Glycosyltransferase</keyword>
<keyword id="KW-1185">Reference proteome</keyword>
<keyword id="KW-0808">Transferase</keyword>
<accession>Q5ZWR3</accession>
<gene>
    <name type="ordered locus">lpg1022</name>
</gene>
<evidence type="ECO:0000255" key="1">
    <source>
        <dbReference type="HAMAP-Rule" id="MF_00703"/>
    </source>
</evidence>
<reference key="1">
    <citation type="journal article" date="2004" name="Science">
        <title>The genomic sequence of the accidental pathogen Legionella pneumophila.</title>
        <authorList>
            <person name="Chien M."/>
            <person name="Morozova I."/>
            <person name="Shi S."/>
            <person name="Sheng H."/>
            <person name="Chen J."/>
            <person name="Gomez S.M."/>
            <person name="Asamani G."/>
            <person name="Hill K."/>
            <person name="Nuara J."/>
            <person name="Feder M."/>
            <person name="Rineer J."/>
            <person name="Greenberg J.J."/>
            <person name="Steshenko V."/>
            <person name="Park S.H."/>
            <person name="Zhao B."/>
            <person name="Teplitskaya E."/>
            <person name="Edwards J.R."/>
            <person name="Pampou S."/>
            <person name="Georghiou A."/>
            <person name="Chou I.-C."/>
            <person name="Iannuccilli W."/>
            <person name="Ulz M.E."/>
            <person name="Kim D.H."/>
            <person name="Geringer-Sameth A."/>
            <person name="Goldsberry C."/>
            <person name="Morozov P."/>
            <person name="Fischer S.G."/>
            <person name="Segal G."/>
            <person name="Qu X."/>
            <person name="Rzhetsky A."/>
            <person name="Zhang P."/>
            <person name="Cayanis E."/>
            <person name="De Jong P.J."/>
            <person name="Ju J."/>
            <person name="Kalachikov S."/>
            <person name="Shuman H.A."/>
            <person name="Russo J.J."/>
        </authorList>
    </citation>
    <scope>NUCLEOTIDE SEQUENCE [LARGE SCALE GENOMIC DNA]</scope>
    <source>
        <strain>Philadelphia 1 / ATCC 33152 / DSM 7513</strain>
    </source>
</reference>
<sequence>MHDSFLSANGGFVVSKKTPHGLRLKHLGIKTYHEAIIYMREDCHVCHSEGFEVQTRIQVTLGSRSIIATLNVVTSELLQPGEAGLSDYAWESLHAKEGDEIQVSHPKPLESLSYVHAKIYGNELSFEQMKVIIDDVLSGRLSDVQISAFLAASGAGRLTRTEVMKLTKAMIDSGDRLSWPSPLVVDKHCVGGLPGNRTTLIVVPIVASFGLMIPKTSSRAITSPAGTADTMETLAPVHLSPQKMRQVVEQENGCIVWGGAVSLSPADDVLIRVERAIDLDSEGQLVASILSKKIATGATHAVIDIPVGPTAKVRNQSMALLLKQSLEEVGNELGLVVRALFTDGSQPVGHGIGPSLEARDVLAVLQGLPDAPNDLRERALTLAGAALECSSKVPPGLGKSIATQLLESGQAFKKFQAICEAQGGMRELTKARFTYPVVAAKEGKVSLIDNRKLAKIAKLAGAPKSKSAGIDLHAHVGESVEQGEPLFTIHSESLGELHYACDLLRDKQDIIILGENP</sequence>